<feature type="chain" id="PRO_0000224660" description="UDP-N-acetylenolpyruvoylglucosamine reductase 1">
    <location>
        <begin position="1"/>
        <end position="301"/>
    </location>
</feature>
<feature type="domain" description="FAD-binding PCMH-type" evidence="1">
    <location>
        <begin position="29"/>
        <end position="196"/>
    </location>
</feature>
<feature type="active site" evidence="1">
    <location>
        <position position="174"/>
    </location>
</feature>
<feature type="active site" description="Proton donor" evidence="1">
    <location>
        <position position="225"/>
    </location>
</feature>
<feature type="active site" evidence="1">
    <location>
        <position position="295"/>
    </location>
</feature>
<accession>Q6HEQ5</accession>
<name>MURB1_BACHK</name>
<protein>
    <recommendedName>
        <fullName evidence="1">UDP-N-acetylenolpyruvoylglucosamine reductase 1</fullName>
        <ecNumber evidence="1">1.3.1.98</ecNumber>
    </recommendedName>
    <alternativeName>
        <fullName evidence="1">UDP-N-acetylmuramate dehydrogenase 1</fullName>
    </alternativeName>
</protein>
<dbReference type="EC" id="1.3.1.98" evidence="1"/>
<dbReference type="EMBL" id="AE017355">
    <property type="protein sequence ID" value="AAT61607.1"/>
    <property type="molecule type" value="Genomic_DNA"/>
</dbReference>
<dbReference type="RefSeq" id="YP_037971.1">
    <property type="nucleotide sequence ID" value="NC_005957.1"/>
</dbReference>
<dbReference type="SMR" id="Q6HEQ5"/>
<dbReference type="KEGG" id="btk:BT9727_3651"/>
<dbReference type="PATRIC" id="fig|281309.8.peg.3890"/>
<dbReference type="HOGENOM" id="CLU_035304_1_1_9"/>
<dbReference type="UniPathway" id="UPA00219"/>
<dbReference type="Proteomes" id="UP000001301">
    <property type="component" value="Chromosome"/>
</dbReference>
<dbReference type="GO" id="GO:0005829">
    <property type="term" value="C:cytosol"/>
    <property type="evidence" value="ECO:0007669"/>
    <property type="project" value="TreeGrafter"/>
</dbReference>
<dbReference type="GO" id="GO:0071949">
    <property type="term" value="F:FAD binding"/>
    <property type="evidence" value="ECO:0007669"/>
    <property type="project" value="InterPro"/>
</dbReference>
<dbReference type="GO" id="GO:0008762">
    <property type="term" value="F:UDP-N-acetylmuramate dehydrogenase activity"/>
    <property type="evidence" value="ECO:0007669"/>
    <property type="project" value="UniProtKB-UniRule"/>
</dbReference>
<dbReference type="GO" id="GO:0051301">
    <property type="term" value="P:cell division"/>
    <property type="evidence" value="ECO:0007669"/>
    <property type="project" value="UniProtKB-KW"/>
</dbReference>
<dbReference type="GO" id="GO:0071555">
    <property type="term" value="P:cell wall organization"/>
    <property type="evidence" value="ECO:0007669"/>
    <property type="project" value="UniProtKB-KW"/>
</dbReference>
<dbReference type="GO" id="GO:0009252">
    <property type="term" value="P:peptidoglycan biosynthetic process"/>
    <property type="evidence" value="ECO:0007669"/>
    <property type="project" value="UniProtKB-UniRule"/>
</dbReference>
<dbReference type="GO" id="GO:0008360">
    <property type="term" value="P:regulation of cell shape"/>
    <property type="evidence" value="ECO:0007669"/>
    <property type="project" value="UniProtKB-KW"/>
</dbReference>
<dbReference type="Gene3D" id="3.30.465.10">
    <property type="match status" value="1"/>
</dbReference>
<dbReference type="Gene3D" id="3.90.78.10">
    <property type="entry name" value="UDP-N-acetylenolpyruvoylglucosamine reductase, C-terminal domain"/>
    <property type="match status" value="1"/>
</dbReference>
<dbReference type="Gene3D" id="3.30.43.10">
    <property type="entry name" value="Uridine Diphospho-n-acetylenolpyruvylglucosamine Reductase, domain 2"/>
    <property type="match status" value="1"/>
</dbReference>
<dbReference type="HAMAP" id="MF_00037">
    <property type="entry name" value="MurB"/>
    <property type="match status" value="1"/>
</dbReference>
<dbReference type="InterPro" id="IPR016166">
    <property type="entry name" value="FAD-bd_PCMH"/>
</dbReference>
<dbReference type="InterPro" id="IPR036318">
    <property type="entry name" value="FAD-bd_PCMH-like_sf"/>
</dbReference>
<dbReference type="InterPro" id="IPR016167">
    <property type="entry name" value="FAD-bd_PCMH_sub1"/>
</dbReference>
<dbReference type="InterPro" id="IPR016169">
    <property type="entry name" value="FAD-bd_PCMH_sub2"/>
</dbReference>
<dbReference type="InterPro" id="IPR003170">
    <property type="entry name" value="MurB"/>
</dbReference>
<dbReference type="InterPro" id="IPR011601">
    <property type="entry name" value="MurB_C"/>
</dbReference>
<dbReference type="InterPro" id="IPR036635">
    <property type="entry name" value="MurB_C_sf"/>
</dbReference>
<dbReference type="InterPro" id="IPR006094">
    <property type="entry name" value="Oxid_FAD_bind_N"/>
</dbReference>
<dbReference type="NCBIfam" id="TIGR00179">
    <property type="entry name" value="murB"/>
    <property type="match status" value="1"/>
</dbReference>
<dbReference type="NCBIfam" id="NF010480">
    <property type="entry name" value="PRK13905.1"/>
    <property type="match status" value="1"/>
</dbReference>
<dbReference type="PANTHER" id="PTHR21071">
    <property type="entry name" value="UDP-N-ACETYLENOLPYRUVOYLGLUCOSAMINE REDUCTASE"/>
    <property type="match status" value="1"/>
</dbReference>
<dbReference type="PANTHER" id="PTHR21071:SF5">
    <property type="entry name" value="UDP-N-ACETYLENOLPYRUVOYLGLUCOSAMINE REDUCTASE"/>
    <property type="match status" value="1"/>
</dbReference>
<dbReference type="Pfam" id="PF01565">
    <property type="entry name" value="FAD_binding_4"/>
    <property type="match status" value="1"/>
</dbReference>
<dbReference type="Pfam" id="PF02873">
    <property type="entry name" value="MurB_C"/>
    <property type="match status" value="1"/>
</dbReference>
<dbReference type="SUPFAM" id="SSF56176">
    <property type="entry name" value="FAD-binding/transporter-associated domain-like"/>
    <property type="match status" value="1"/>
</dbReference>
<dbReference type="SUPFAM" id="SSF56194">
    <property type="entry name" value="Uridine diphospho-N-Acetylenolpyruvylglucosamine reductase, MurB, C-terminal domain"/>
    <property type="match status" value="1"/>
</dbReference>
<dbReference type="PROSITE" id="PS51387">
    <property type="entry name" value="FAD_PCMH"/>
    <property type="match status" value="1"/>
</dbReference>
<gene>
    <name evidence="1" type="primary">murB1</name>
    <name type="ordered locus">BT9727_3651</name>
</gene>
<reference key="1">
    <citation type="journal article" date="2006" name="J. Bacteriol.">
        <title>Pathogenomic sequence analysis of Bacillus cereus and Bacillus thuringiensis isolates closely related to Bacillus anthracis.</title>
        <authorList>
            <person name="Han C.S."/>
            <person name="Xie G."/>
            <person name="Challacombe J.F."/>
            <person name="Altherr M.R."/>
            <person name="Bhotika S.S."/>
            <person name="Bruce D."/>
            <person name="Campbell C.S."/>
            <person name="Campbell M.L."/>
            <person name="Chen J."/>
            <person name="Chertkov O."/>
            <person name="Cleland C."/>
            <person name="Dimitrijevic M."/>
            <person name="Doggett N.A."/>
            <person name="Fawcett J.J."/>
            <person name="Glavina T."/>
            <person name="Goodwin L.A."/>
            <person name="Hill K.K."/>
            <person name="Hitchcock P."/>
            <person name="Jackson P.J."/>
            <person name="Keim P."/>
            <person name="Kewalramani A.R."/>
            <person name="Longmire J."/>
            <person name="Lucas S."/>
            <person name="Malfatti S."/>
            <person name="McMurry K."/>
            <person name="Meincke L.J."/>
            <person name="Misra M."/>
            <person name="Moseman B.L."/>
            <person name="Mundt M."/>
            <person name="Munk A.C."/>
            <person name="Okinaka R.T."/>
            <person name="Parson-Quintana B."/>
            <person name="Reilly L.P."/>
            <person name="Richardson P."/>
            <person name="Robinson D.L."/>
            <person name="Rubin E."/>
            <person name="Saunders E."/>
            <person name="Tapia R."/>
            <person name="Tesmer J.G."/>
            <person name="Thayer N."/>
            <person name="Thompson L.S."/>
            <person name="Tice H."/>
            <person name="Ticknor L.O."/>
            <person name="Wills P.L."/>
            <person name="Brettin T.S."/>
            <person name="Gilna P."/>
        </authorList>
    </citation>
    <scope>NUCLEOTIDE SEQUENCE [LARGE SCALE GENOMIC DNA]</scope>
    <source>
        <strain>97-27</strain>
    </source>
</reference>
<proteinExistence type="inferred from homology"/>
<comment type="function">
    <text evidence="1">Cell wall formation.</text>
</comment>
<comment type="catalytic activity">
    <reaction evidence="1">
        <text>UDP-N-acetyl-alpha-D-muramate + NADP(+) = UDP-N-acetyl-3-O-(1-carboxyvinyl)-alpha-D-glucosamine + NADPH + H(+)</text>
        <dbReference type="Rhea" id="RHEA:12248"/>
        <dbReference type="ChEBI" id="CHEBI:15378"/>
        <dbReference type="ChEBI" id="CHEBI:57783"/>
        <dbReference type="ChEBI" id="CHEBI:58349"/>
        <dbReference type="ChEBI" id="CHEBI:68483"/>
        <dbReference type="ChEBI" id="CHEBI:70757"/>
        <dbReference type="EC" id="1.3.1.98"/>
    </reaction>
</comment>
<comment type="cofactor">
    <cofactor evidence="1">
        <name>FAD</name>
        <dbReference type="ChEBI" id="CHEBI:57692"/>
    </cofactor>
</comment>
<comment type="pathway">
    <text evidence="1">Cell wall biogenesis; peptidoglycan biosynthesis.</text>
</comment>
<comment type="subcellular location">
    <subcellularLocation>
        <location evidence="1">Cytoplasm</location>
    </subcellularLocation>
</comment>
<comment type="similarity">
    <text evidence="1">Belongs to the MurB family.</text>
</comment>
<keyword id="KW-0131">Cell cycle</keyword>
<keyword id="KW-0132">Cell division</keyword>
<keyword id="KW-0133">Cell shape</keyword>
<keyword id="KW-0961">Cell wall biogenesis/degradation</keyword>
<keyword id="KW-0963">Cytoplasm</keyword>
<keyword id="KW-0274">FAD</keyword>
<keyword id="KW-0285">Flavoprotein</keyword>
<keyword id="KW-0521">NADP</keyword>
<keyword id="KW-0560">Oxidoreductase</keyword>
<keyword id="KW-0573">Peptidoglycan synthesis</keyword>
<organism>
    <name type="scientific">Bacillus thuringiensis subsp. konkukian (strain 97-27)</name>
    <dbReference type="NCBI Taxonomy" id="281309"/>
    <lineage>
        <taxon>Bacteria</taxon>
        <taxon>Bacillati</taxon>
        <taxon>Bacillota</taxon>
        <taxon>Bacilli</taxon>
        <taxon>Bacillales</taxon>
        <taxon>Bacillaceae</taxon>
        <taxon>Bacillus</taxon>
        <taxon>Bacillus cereus group</taxon>
    </lineage>
</organism>
<sequence>MEQLVNELIEANVGRVLVDEPLARYTTMKIGGPADILIVPKHVAGIEKTLQLVKKYKTKWTVIGRGSNLLVSDLGIEGVVIRLGEGLDHLEVEKHRVRVGGGYPLIKLSTLLSRQGLAGLEFASGIPGSVGGAVYMNAGAHKSDISNILSKALILFEDGTIDWLTHGEMGFSYRTSVLQTKRPGIVLEAEFQLQIGERERIVSVMQKNKDYRRETQPWNHPCAGSVFRNPTPYFAGDLIEKAGLRGYQIGGAQISEMHGNFIINTGGASAQDVLSLIALIKQTIKDKFGVEMHTEVEIIGR</sequence>
<evidence type="ECO:0000255" key="1">
    <source>
        <dbReference type="HAMAP-Rule" id="MF_00037"/>
    </source>
</evidence>